<name>PANE_ECO57</name>
<accession>Q8XE72</accession>
<reference key="1">
    <citation type="journal article" date="2001" name="Nature">
        <title>Genome sequence of enterohaemorrhagic Escherichia coli O157:H7.</title>
        <authorList>
            <person name="Perna N.T."/>
            <person name="Plunkett G. III"/>
            <person name="Burland V."/>
            <person name="Mau B."/>
            <person name="Glasner J.D."/>
            <person name="Rose D.J."/>
            <person name="Mayhew G.F."/>
            <person name="Evans P.S."/>
            <person name="Gregor J."/>
            <person name="Kirkpatrick H.A."/>
            <person name="Posfai G."/>
            <person name="Hackett J."/>
            <person name="Klink S."/>
            <person name="Boutin A."/>
            <person name="Shao Y."/>
            <person name="Miller L."/>
            <person name="Grotbeck E.J."/>
            <person name="Davis N.W."/>
            <person name="Lim A."/>
            <person name="Dimalanta E.T."/>
            <person name="Potamousis K."/>
            <person name="Apodaca J."/>
            <person name="Anantharaman T.S."/>
            <person name="Lin J."/>
            <person name="Yen G."/>
            <person name="Schwartz D.C."/>
            <person name="Welch R.A."/>
            <person name="Blattner F.R."/>
        </authorList>
    </citation>
    <scope>NUCLEOTIDE SEQUENCE [LARGE SCALE GENOMIC DNA]</scope>
    <source>
        <strain>O157:H7 / EDL933 / ATCC 700927 / EHEC</strain>
    </source>
</reference>
<reference key="2">
    <citation type="journal article" date="2001" name="DNA Res.">
        <title>Complete genome sequence of enterohemorrhagic Escherichia coli O157:H7 and genomic comparison with a laboratory strain K-12.</title>
        <authorList>
            <person name="Hayashi T."/>
            <person name="Makino K."/>
            <person name="Ohnishi M."/>
            <person name="Kurokawa K."/>
            <person name="Ishii K."/>
            <person name="Yokoyama K."/>
            <person name="Han C.-G."/>
            <person name="Ohtsubo E."/>
            <person name="Nakayama K."/>
            <person name="Murata T."/>
            <person name="Tanaka M."/>
            <person name="Tobe T."/>
            <person name="Iida T."/>
            <person name="Takami H."/>
            <person name="Honda T."/>
            <person name="Sasakawa C."/>
            <person name="Ogasawara N."/>
            <person name="Yasunaga T."/>
            <person name="Kuhara S."/>
            <person name="Shiba T."/>
            <person name="Hattori M."/>
            <person name="Shinagawa H."/>
        </authorList>
    </citation>
    <scope>NUCLEOTIDE SEQUENCE [LARGE SCALE GENOMIC DNA]</scope>
    <source>
        <strain>O157:H7 / Sakai / RIMD 0509952 / EHEC</strain>
    </source>
</reference>
<evidence type="ECO:0000250" key="1">
    <source>
        <dbReference type="UniProtKB" id="P0A9J4"/>
    </source>
</evidence>
<evidence type="ECO:0000305" key="2"/>
<feature type="chain" id="PRO_0000157302" description="2-dehydropantoate 2-reductase">
    <location>
        <begin position="1"/>
        <end position="303"/>
    </location>
</feature>
<feature type="active site" description="Proton donor" evidence="1">
    <location>
        <position position="176"/>
    </location>
</feature>
<feature type="binding site" evidence="1">
    <location>
        <begin position="7"/>
        <end position="12"/>
    </location>
    <ligand>
        <name>NADP(+)</name>
        <dbReference type="ChEBI" id="CHEBI:58349"/>
    </ligand>
</feature>
<feature type="binding site" evidence="1">
    <location>
        <position position="98"/>
    </location>
    <ligand>
        <name>NADP(+)</name>
        <dbReference type="ChEBI" id="CHEBI:58349"/>
    </ligand>
</feature>
<feature type="binding site" evidence="1">
    <location>
        <position position="98"/>
    </location>
    <ligand>
        <name>substrate</name>
    </ligand>
</feature>
<feature type="binding site" evidence="1">
    <location>
        <position position="122"/>
    </location>
    <ligand>
        <name>NADP(+)</name>
        <dbReference type="ChEBI" id="CHEBI:58349"/>
    </ligand>
</feature>
<feature type="binding site" evidence="1">
    <location>
        <position position="180"/>
    </location>
    <ligand>
        <name>substrate</name>
    </ligand>
</feature>
<feature type="binding site" evidence="1">
    <location>
        <position position="184"/>
    </location>
    <ligand>
        <name>substrate</name>
    </ligand>
</feature>
<feature type="binding site" evidence="1">
    <location>
        <position position="194"/>
    </location>
    <ligand>
        <name>substrate</name>
    </ligand>
</feature>
<feature type="binding site" evidence="1">
    <location>
        <position position="244"/>
    </location>
    <ligand>
        <name>substrate</name>
    </ligand>
</feature>
<feature type="binding site" evidence="1">
    <location>
        <position position="256"/>
    </location>
    <ligand>
        <name>NADP(+)</name>
        <dbReference type="ChEBI" id="CHEBI:58349"/>
    </ligand>
</feature>
<sequence>MKITVLGCGALGQLWLTALCKQGHEVQGWLRVPQPYCSVNLVETDGSIFNESLTANDPDFLATSDLLLVTLKAWQVSDAVKSLASTLPVTTPILLIHNGMGTIEELQNIQQPLLMGTTTHAACRDGNVIIHVANGITHIGPARQQDGDYSYLADILQTVLPDVAWHNNIRAELWRKLAVNCVINPLTAIWNCPNGELRHHPQEIMQICEEVAAVIEREGHHTSAEDLRDYVMQVIDATAENISSMLQDIRTLRHTEIDYINGFLLRRARAHGIAVPENTRLFEMVKRKESEYERIGTGLPRPW</sequence>
<protein>
    <recommendedName>
        <fullName evidence="1">2-dehydropantoate 2-reductase</fullName>
        <ecNumber evidence="1">1.1.1.169</ecNumber>
    </recommendedName>
    <alternativeName>
        <fullName evidence="1">Ketopantoate reductase</fullName>
        <shortName evidence="1">KPR</shortName>
    </alternativeName>
</protein>
<gene>
    <name type="primary">panE</name>
    <name type="synonym">apbA</name>
    <name type="ordered locus">Z0528</name>
    <name type="ordered locus">ECs0479</name>
</gene>
<dbReference type="EC" id="1.1.1.169" evidence="1"/>
<dbReference type="EMBL" id="AE005174">
    <property type="protein sequence ID" value="AAG54775.1"/>
    <property type="molecule type" value="Genomic_DNA"/>
</dbReference>
<dbReference type="EMBL" id="BA000007">
    <property type="protein sequence ID" value="BAB33902.1"/>
    <property type="molecule type" value="Genomic_DNA"/>
</dbReference>
<dbReference type="PIR" id="C85539">
    <property type="entry name" value="C85539"/>
</dbReference>
<dbReference type="PIR" id="G90688">
    <property type="entry name" value="G90688"/>
</dbReference>
<dbReference type="RefSeq" id="NP_308506.1">
    <property type="nucleotide sequence ID" value="NC_002695.1"/>
</dbReference>
<dbReference type="RefSeq" id="WP_000705859.1">
    <property type="nucleotide sequence ID" value="NZ_VOAI01000005.1"/>
</dbReference>
<dbReference type="BMRB" id="Q8XE72"/>
<dbReference type="SMR" id="Q8XE72"/>
<dbReference type="STRING" id="155864.Z0528"/>
<dbReference type="GeneID" id="914581"/>
<dbReference type="KEGG" id="ece:Z0528"/>
<dbReference type="KEGG" id="ecs:ECs_0479"/>
<dbReference type="PATRIC" id="fig|386585.9.peg.580"/>
<dbReference type="eggNOG" id="COG1893">
    <property type="taxonomic scope" value="Bacteria"/>
</dbReference>
<dbReference type="HOGENOM" id="CLU_031468_0_1_6"/>
<dbReference type="OMA" id="ANYSSMY"/>
<dbReference type="UniPathway" id="UPA00028">
    <property type="reaction ID" value="UER00004"/>
</dbReference>
<dbReference type="Proteomes" id="UP000000558">
    <property type="component" value="Chromosome"/>
</dbReference>
<dbReference type="Proteomes" id="UP000002519">
    <property type="component" value="Chromosome"/>
</dbReference>
<dbReference type="GO" id="GO:0005737">
    <property type="term" value="C:cytoplasm"/>
    <property type="evidence" value="ECO:0007669"/>
    <property type="project" value="UniProtKB-SubCell"/>
</dbReference>
<dbReference type="GO" id="GO:0008677">
    <property type="term" value="F:2-dehydropantoate 2-reductase activity"/>
    <property type="evidence" value="ECO:0007669"/>
    <property type="project" value="UniProtKB-EC"/>
</dbReference>
<dbReference type="GO" id="GO:0050661">
    <property type="term" value="F:NADP binding"/>
    <property type="evidence" value="ECO:0007669"/>
    <property type="project" value="TreeGrafter"/>
</dbReference>
<dbReference type="GO" id="GO:0015940">
    <property type="term" value="P:pantothenate biosynthetic process"/>
    <property type="evidence" value="ECO:0007669"/>
    <property type="project" value="UniProtKB-UniPathway"/>
</dbReference>
<dbReference type="FunFam" id="1.10.1040.10:FF:000014">
    <property type="entry name" value="2-dehydropantoate 2-reductase"/>
    <property type="match status" value="1"/>
</dbReference>
<dbReference type="FunFam" id="3.40.50.720:FF:000162">
    <property type="entry name" value="2-dehydropantoate 2-reductase"/>
    <property type="match status" value="1"/>
</dbReference>
<dbReference type="Gene3D" id="1.10.1040.10">
    <property type="entry name" value="N-(1-d-carboxylethyl)-l-norvaline Dehydrogenase, domain 2"/>
    <property type="match status" value="1"/>
</dbReference>
<dbReference type="Gene3D" id="3.40.50.720">
    <property type="entry name" value="NAD(P)-binding Rossmann-like Domain"/>
    <property type="match status" value="1"/>
</dbReference>
<dbReference type="InterPro" id="IPR008927">
    <property type="entry name" value="6-PGluconate_DH-like_C_sf"/>
</dbReference>
<dbReference type="InterPro" id="IPR013328">
    <property type="entry name" value="6PGD_dom2"/>
</dbReference>
<dbReference type="InterPro" id="IPR003710">
    <property type="entry name" value="ApbA"/>
</dbReference>
<dbReference type="InterPro" id="IPR050838">
    <property type="entry name" value="Ketopantoate_reductase"/>
</dbReference>
<dbReference type="InterPro" id="IPR013752">
    <property type="entry name" value="KPA_reductase"/>
</dbReference>
<dbReference type="InterPro" id="IPR013332">
    <property type="entry name" value="KPR_N"/>
</dbReference>
<dbReference type="InterPro" id="IPR036291">
    <property type="entry name" value="NAD(P)-bd_dom_sf"/>
</dbReference>
<dbReference type="NCBIfam" id="TIGR00745">
    <property type="entry name" value="apbA_panE"/>
    <property type="match status" value="1"/>
</dbReference>
<dbReference type="NCBIfam" id="NF005087">
    <property type="entry name" value="PRK06522.1-1"/>
    <property type="match status" value="1"/>
</dbReference>
<dbReference type="PANTHER" id="PTHR43765:SF2">
    <property type="entry name" value="2-DEHYDROPANTOATE 2-REDUCTASE"/>
    <property type="match status" value="1"/>
</dbReference>
<dbReference type="PANTHER" id="PTHR43765">
    <property type="entry name" value="2-DEHYDROPANTOATE 2-REDUCTASE-RELATED"/>
    <property type="match status" value="1"/>
</dbReference>
<dbReference type="Pfam" id="PF02558">
    <property type="entry name" value="ApbA"/>
    <property type="match status" value="1"/>
</dbReference>
<dbReference type="Pfam" id="PF08546">
    <property type="entry name" value="ApbA_C"/>
    <property type="match status" value="1"/>
</dbReference>
<dbReference type="SUPFAM" id="SSF48179">
    <property type="entry name" value="6-phosphogluconate dehydrogenase C-terminal domain-like"/>
    <property type="match status" value="1"/>
</dbReference>
<dbReference type="SUPFAM" id="SSF51735">
    <property type="entry name" value="NAD(P)-binding Rossmann-fold domains"/>
    <property type="match status" value="1"/>
</dbReference>
<keyword id="KW-0963">Cytoplasm</keyword>
<keyword id="KW-0521">NADP</keyword>
<keyword id="KW-0560">Oxidoreductase</keyword>
<keyword id="KW-0566">Pantothenate biosynthesis</keyword>
<keyword id="KW-1185">Reference proteome</keyword>
<organism>
    <name type="scientific">Escherichia coli O157:H7</name>
    <dbReference type="NCBI Taxonomy" id="83334"/>
    <lineage>
        <taxon>Bacteria</taxon>
        <taxon>Pseudomonadati</taxon>
        <taxon>Pseudomonadota</taxon>
        <taxon>Gammaproteobacteria</taxon>
        <taxon>Enterobacterales</taxon>
        <taxon>Enterobacteriaceae</taxon>
        <taxon>Escherichia</taxon>
    </lineage>
</organism>
<comment type="function">
    <text evidence="1">Catalyzes the NADPH-dependent reduction of ketopantoate into pantoic acid.</text>
</comment>
<comment type="catalytic activity">
    <reaction evidence="1">
        <text>(R)-pantoate + NADP(+) = 2-dehydropantoate + NADPH + H(+)</text>
        <dbReference type="Rhea" id="RHEA:16233"/>
        <dbReference type="ChEBI" id="CHEBI:11561"/>
        <dbReference type="ChEBI" id="CHEBI:15378"/>
        <dbReference type="ChEBI" id="CHEBI:15980"/>
        <dbReference type="ChEBI" id="CHEBI:57783"/>
        <dbReference type="ChEBI" id="CHEBI:58349"/>
        <dbReference type="EC" id="1.1.1.169"/>
    </reaction>
</comment>
<comment type="pathway">
    <text evidence="1">Cofactor biosynthesis; (R)-pantothenate biosynthesis; (R)-pantoate from 3-methyl-2-oxobutanoate: step 2/2.</text>
</comment>
<comment type="subunit">
    <text evidence="1">Monomer.</text>
</comment>
<comment type="subcellular location">
    <subcellularLocation>
        <location evidence="1">Cytoplasm</location>
    </subcellularLocation>
</comment>
<comment type="similarity">
    <text evidence="2">Belongs to the ketopantoate reductase family.</text>
</comment>
<proteinExistence type="inferred from homology"/>